<feature type="chain" id="PRO_1000133048" description="Probable GTP-binding protein EngB">
    <location>
        <begin position="1"/>
        <end position="205"/>
    </location>
</feature>
<feature type="domain" description="EngB-type G" evidence="1">
    <location>
        <begin position="25"/>
        <end position="199"/>
    </location>
</feature>
<feature type="binding site" evidence="1">
    <location>
        <begin position="33"/>
        <end position="40"/>
    </location>
    <ligand>
        <name>GTP</name>
        <dbReference type="ChEBI" id="CHEBI:37565"/>
    </ligand>
</feature>
<feature type="binding site" evidence="1">
    <location>
        <position position="40"/>
    </location>
    <ligand>
        <name>Mg(2+)</name>
        <dbReference type="ChEBI" id="CHEBI:18420"/>
    </ligand>
</feature>
<feature type="binding site" evidence="1">
    <location>
        <begin position="60"/>
        <end position="64"/>
    </location>
    <ligand>
        <name>GTP</name>
        <dbReference type="ChEBI" id="CHEBI:37565"/>
    </ligand>
</feature>
<feature type="binding site" evidence="1">
    <location>
        <position position="62"/>
    </location>
    <ligand>
        <name>Mg(2+)</name>
        <dbReference type="ChEBI" id="CHEBI:18420"/>
    </ligand>
</feature>
<feature type="binding site" evidence="1">
    <location>
        <begin position="78"/>
        <end position="81"/>
    </location>
    <ligand>
        <name>GTP</name>
        <dbReference type="ChEBI" id="CHEBI:37565"/>
    </ligand>
</feature>
<feature type="binding site" evidence="1">
    <location>
        <begin position="145"/>
        <end position="148"/>
    </location>
    <ligand>
        <name>GTP</name>
        <dbReference type="ChEBI" id="CHEBI:37565"/>
    </ligand>
</feature>
<feature type="binding site" evidence="1">
    <location>
        <begin position="178"/>
        <end position="180"/>
    </location>
    <ligand>
        <name>GTP</name>
        <dbReference type="ChEBI" id="CHEBI:37565"/>
    </ligand>
</feature>
<comment type="function">
    <text evidence="1">Necessary for normal cell division and for the maintenance of normal septation.</text>
</comment>
<comment type="cofactor">
    <cofactor evidence="1">
        <name>Mg(2+)</name>
        <dbReference type="ChEBI" id="CHEBI:18420"/>
    </cofactor>
</comment>
<comment type="similarity">
    <text evidence="1">Belongs to the TRAFAC class TrmE-Era-EngA-EngB-Septin-like GTPase superfamily. EngB GTPase family.</text>
</comment>
<reference key="1">
    <citation type="journal article" date="2009" name="Science">
        <title>The dynamics and time scale of ongoing genomic erosion in symbiotic bacteria.</title>
        <authorList>
            <person name="Moran N.A."/>
            <person name="McLaughlin H.J."/>
            <person name="Sorek R."/>
        </authorList>
    </citation>
    <scope>NUCLEOTIDE SEQUENCE [LARGE SCALE GENOMIC DNA]</scope>
    <source>
        <strain>Tuc7</strain>
    </source>
</reference>
<keyword id="KW-0131">Cell cycle</keyword>
<keyword id="KW-0132">Cell division</keyword>
<keyword id="KW-0342">GTP-binding</keyword>
<keyword id="KW-0460">Magnesium</keyword>
<keyword id="KW-0479">Metal-binding</keyword>
<keyword id="KW-0547">Nucleotide-binding</keyword>
<keyword id="KW-0717">Septation</keyword>
<proteinExistence type="inferred from homology"/>
<dbReference type="EMBL" id="CP001158">
    <property type="protein sequence ID" value="ACL30227.1"/>
    <property type="molecule type" value="Genomic_DNA"/>
</dbReference>
<dbReference type="SMR" id="B8D7W2"/>
<dbReference type="KEGG" id="bau:BUAPTUC7_426"/>
<dbReference type="HOGENOM" id="CLU_033732_1_0_6"/>
<dbReference type="GO" id="GO:0005829">
    <property type="term" value="C:cytosol"/>
    <property type="evidence" value="ECO:0007669"/>
    <property type="project" value="TreeGrafter"/>
</dbReference>
<dbReference type="GO" id="GO:0005525">
    <property type="term" value="F:GTP binding"/>
    <property type="evidence" value="ECO:0007669"/>
    <property type="project" value="UniProtKB-UniRule"/>
</dbReference>
<dbReference type="GO" id="GO:0046872">
    <property type="term" value="F:metal ion binding"/>
    <property type="evidence" value="ECO:0007669"/>
    <property type="project" value="UniProtKB-KW"/>
</dbReference>
<dbReference type="GO" id="GO:0000917">
    <property type="term" value="P:division septum assembly"/>
    <property type="evidence" value="ECO:0007669"/>
    <property type="project" value="UniProtKB-KW"/>
</dbReference>
<dbReference type="CDD" id="cd01876">
    <property type="entry name" value="YihA_EngB"/>
    <property type="match status" value="1"/>
</dbReference>
<dbReference type="FunFam" id="3.40.50.300:FF:000098">
    <property type="entry name" value="Probable GTP-binding protein EngB"/>
    <property type="match status" value="1"/>
</dbReference>
<dbReference type="Gene3D" id="3.40.50.300">
    <property type="entry name" value="P-loop containing nucleotide triphosphate hydrolases"/>
    <property type="match status" value="1"/>
</dbReference>
<dbReference type="HAMAP" id="MF_00321">
    <property type="entry name" value="GTPase_EngB"/>
    <property type="match status" value="1"/>
</dbReference>
<dbReference type="InterPro" id="IPR030393">
    <property type="entry name" value="G_ENGB_dom"/>
</dbReference>
<dbReference type="InterPro" id="IPR006073">
    <property type="entry name" value="GTP-bd"/>
</dbReference>
<dbReference type="InterPro" id="IPR019987">
    <property type="entry name" value="GTP-bd_ribosome_bio_YsxC"/>
</dbReference>
<dbReference type="InterPro" id="IPR027417">
    <property type="entry name" value="P-loop_NTPase"/>
</dbReference>
<dbReference type="NCBIfam" id="TIGR03598">
    <property type="entry name" value="GTPase_YsxC"/>
    <property type="match status" value="1"/>
</dbReference>
<dbReference type="PANTHER" id="PTHR11649:SF13">
    <property type="entry name" value="ENGB-TYPE G DOMAIN-CONTAINING PROTEIN"/>
    <property type="match status" value="1"/>
</dbReference>
<dbReference type="PANTHER" id="PTHR11649">
    <property type="entry name" value="MSS1/TRME-RELATED GTP-BINDING PROTEIN"/>
    <property type="match status" value="1"/>
</dbReference>
<dbReference type="Pfam" id="PF01926">
    <property type="entry name" value="MMR_HSR1"/>
    <property type="match status" value="1"/>
</dbReference>
<dbReference type="SUPFAM" id="SSF52540">
    <property type="entry name" value="P-loop containing nucleoside triphosphate hydrolases"/>
    <property type="match status" value="1"/>
</dbReference>
<dbReference type="PROSITE" id="PS51706">
    <property type="entry name" value="G_ENGB"/>
    <property type="match status" value="1"/>
</dbReference>
<accession>B8D7W2</accession>
<sequence length="205" mass="23767">MNSLDYNKTNFLKSYSKITDIDIQNGIEIAFIGYSNTGKSSAINALTNQKKLARFSKTPGRTQLINFFEVVSGFRIVDLPGYGYSQAPLLVRSKWQKKVYDYLEKREQIKLFVLLMDIRYPLKKLDQKIISIAVQKKISILVLLTKCDKIKINHQKNQADMVFKKLNVLLDSFEIILFSSYKKIGIEKLKLSLNSSYKKHFILNR</sequence>
<name>ENGB_BUCAT</name>
<evidence type="ECO:0000255" key="1">
    <source>
        <dbReference type="HAMAP-Rule" id="MF_00321"/>
    </source>
</evidence>
<protein>
    <recommendedName>
        <fullName evidence="1">Probable GTP-binding protein EngB</fullName>
    </recommendedName>
</protein>
<organism>
    <name type="scientific">Buchnera aphidicola subsp. Acyrthosiphon pisum (strain Tuc7)</name>
    <dbReference type="NCBI Taxonomy" id="561501"/>
    <lineage>
        <taxon>Bacteria</taxon>
        <taxon>Pseudomonadati</taxon>
        <taxon>Pseudomonadota</taxon>
        <taxon>Gammaproteobacteria</taxon>
        <taxon>Enterobacterales</taxon>
        <taxon>Erwiniaceae</taxon>
        <taxon>Buchnera</taxon>
    </lineage>
</organism>
<gene>
    <name evidence="1" type="primary">engB</name>
    <name type="ordered locus">BUAPTUC7_426</name>
</gene>